<feature type="chain" id="PRO_0000228993" description="Kelch domain-containing protein 2">
    <location>
        <begin position="1"/>
        <end position="406"/>
    </location>
</feature>
<feature type="repeat" description="Kelch 1" evidence="1">
    <location>
        <begin position="31"/>
        <end position="85"/>
    </location>
</feature>
<feature type="repeat" description="Kelch 2" evidence="1">
    <location>
        <begin position="92"/>
        <end position="136"/>
    </location>
</feature>
<feature type="repeat" description="Kelch 3" evidence="1">
    <location>
        <begin position="148"/>
        <end position="207"/>
    </location>
</feature>
<feature type="repeat" description="Kelch 4" evidence="1">
    <location>
        <begin position="221"/>
        <end position="259"/>
    </location>
</feature>
<feature type="repeat" description="Kelch 5" evidence="1">
    <location>
        <begin position="271"/>
        <end position="311"/>
    </location>
</feature>
<feature type="repeat" description="Kelch 6" evidence="1">
    <location>
        <begin position="322"/>
        <end position="359"/>
    </location>
</feature>
<feature type="sequence conflict" description="In Ref. 2; BAB26317." evidence="3" ref="2">
    <original>E</original>
    <variation>G</variation>
    <location>
        <position position="22"/>
    </location>
</feature>
<feature type="sequence conflict" description="In Ref. 4; AAH05581." evidence="3" ref="4">
    <original>N</original>
    <variation>Y</variation>
    <location>
        <position position="72"/>
    </location>
</feature>
<feature type="sequence conflict" description="In Ref. 2; BAB26317." evidence="3" ref="2">
    <original>S</original>
    <variation>I</variation>
    <location>
        <position position="368"/>
    </location>
</feature>
<dbReference type="EMBL" id="AY513272">
    <property type="protein sequence ID" value="AAS82954.1"/>
    <property type="molecule type" value="mRNA"/>
</dbReference>
<dbReference type="EMBL" id="AK009481">
    <property type="protein sequence ID" value="BAB26317.1"/>
    <property type="molecule type" value="mRNA"/>
</dbReference>
<dbReference type="EMBL" id="AC099934">
    <property type="status" value="NOT_ANNOTATED_CDS"/>
    <property type="molecule type" value="Genomic_DNA"/>
</dbReference>
<dbReference type="EMBL" id="BC005581">
    <property type="protein sequence ID" value="AAH05581.1"/>
    <property type="molecule type" value="mRNA"/>
</dbReference>
<dbReference type="CCDS" id="CCDS25950.1"/>
<dbReference type="RefSeq" id="NP_081393.2">
    <property type="nucleotide sequence ID" value="NM_027117.3"/>
</dbReference>
<dbReference type="SMR" id="Q4G5Y1"/>
<dbReference type="BioGRID" id="213528">
    <property type="interactions" value="1"/>
</dbReference>
<dbReference type="FunCoup" id="Q4G5Y1">
    <property type="interactions" value="2215"/>
</dbReference>
<dbReference type="IntAct" id="Q4G5Y1">
    <property type="interactions" value="1"/>
</dbReference>
<dbReference type="MINT" id="Q4G5Y1"/>
<dbReference type="STRING" id="10090.ENSMUSP00000021362"/>
<dbReference type="iPTMnet" id="Q4G5Y1"/>
<dbReference type="PhosphoSitePlus" id="Q4G5Y1"/>
<dbReference type="PaxDb" id="10090-ENSMUSP00000021362"/>
<dbReference type="PeptideAtlas" id="Q4G5Y1"/>
<dbReference type="ProteomicsDB" id="264946"/>
<dbReference type="Pumba" id="Q4G5Y1"/>
<dbReference type="Antibodypedia" id="23574">
    <property type="antibodies" value="88 antibodies from 19 providers"/>
</dbReference>
<dbReference type="DNASU" id="69554"/>
<dbReference type="Ensembl" id="ENSMUST00000021362.5">
    <property type="protein sequence ID" value="ENSMUSP00000021362.5"/>
    <property type="gene ID" value="ENSMUSG00000020978.11"/>
</dbReference>
<dbReference type="GeneID" id="69554"/>
<dbReference type="KEGG" id="mmu:69554"/>
<dbReference type="UCSC" id="uc007nrz.2">
    <property type="organism name" value="mouse"/>
</dbReference>
<dbReference type="AGR" id="MGI:1916804"/>
<dbReference type="CTD" id="23588"/>
<dbReference type="MGI" id="MGI:1916804">
    <property type="gene designation" value="Klhdc2"/>
</dbReference>
<dbReference type="VEuPathDB" id="HostDB:ENSMUSG00000020978"/>
<dbReference type="eggNOG" id="KOG0379">
    <property type="taxonomic scope" value="Eukaryota"/>
</dbReference>
<dbReference type="GeneTree" id="ENSGT00940000157150"/>
<dbReference type="HOGENOM" id="CLU_042804_0_0_1"/>
<dbReference type="InParanoid" id="Q4G5Y1"/>
<dbReference type="OMA" id="MGKLLQF"/>
<dbReference type="OrthoDB" id="10251809at2759"/>
<dbReference type="PhylomeDB" id="Q4G5Y1"/>
<dbReference type="TreeFam" id="TF314081"/>
<dbReference type="UniPathway" id="UPA00143"/>
<dbReference type="BioGRID-ORCS" id="69554">
    <property type="hits" value="2 hits in 76 CRISPR screens"/>
</dbReference>
<dbReference type="ChiTaRS" id="Klhdc2">
    <property type="organism name" value="mouse"/>
</dbReference>
<dbReference type="PRO" id="PR:Q4G5Y1"/>
<dbReference type="Proteomes" id="UP000000589">
    <property type="component" value="Chromosome 12"/>
</dbReference>
<dbReference type="RNAct" id="Q4G5Y1">
    <property type="molecule type" value="protein"/>
</dbReference>
<dbReference type="Bgee" id="ENSMUSG00000020978">
    <property type="expression patterns" value="Expressed in respiratory primordium and 267 other cell types or tissues"/>
</dbReference>
<dbReference type="GO" id="GO:0031462">
    <property type="term" value="C:Cul2-RING ubiquitin ligase complex"/>
    <property type="evidence" value="ECO:0000250"/>
    <property type="project" value="UniProtKB"/>
</dbReference>
<dbReference type="GO" id="GO:0016604">
    <property type="term" value="C:nuclear body"/>
    <property type="evidence" value="ECO:0007669"/>
    <property type="project" value="Ensembl"/>
</dbReference>
<dbReference type="GO" id="GO:0031965">
    <property type="term" value="C:nuclear membrane"/>
    <property type="evidence" value="ECO:0007669"/>
    <property type="project" value="Ensembl"/>
</dbReference>
<dbReference type="GO" id="GO:0005634">
    <property type="term" value="C:nucleus"/>
    <property type="evidence" value="ECO:0000250"/>
    <property type="project" value="UniProtKB"/>
</dbReference>
<dbReference type="GO" id="GO:1990756">
    <property type="term" value="F:ubiquitin-like ligase-substrate adaptor activity"/>
    <property type="evidence" value="ECO:0000250"/>
    <property type="project" value="UniProtKB"/>
</dbReference>
<dbReference type="GO" id="GO:0043161">
    <property type="term" value="P:proteasome-mediated ubiquitin-dependent protein catabolic process"/>
    <property type="evidence" value="ECO:0000250"/>
    <property type="project" value="UniProtKB"/>
</dbReference>
<dbReference type="GO" id="GO:0016567">
    <property type="term" value="P:protein ubiquitination"/>
    <property type="evidence" value="ECO:0007669"/>
    <property type="project" value="UniProtKB-UniPathway"/>
</dbReference>
<dbReference type="GO" id="GO:0140627">
    <property type="term" value="P:ubiquitin-dependent protein catabolic process via the C-end degron rule pathway"/>
    <property type="evidence" value="ECO:0000250"/>
    <property type="project" value="UniProtKB"/>
</dbReference>
<dbReference type="FunFam" id="2.120.10.80:FF:000012">
    <property type="entry name" value="Kelch domain-containing protein 2"/>
    <property type="match status" value="1"/>
</dbReference>
<dbReference type="FunFam" id="2.120.10.80:FF:000043">
    <property type="entry name" value="Kelch domain-containing protein 2"/>
    <property type="match status" value="1"/>
</dbReference>
<dbReference type="Gene3D" id="2.120.10.80">
    <property type="entry name" value="Kelch-type beta propeller"/>
    <property type="match status" value="2"/>
</dbReference>
<dbReference type="InterPro" id="IPR011043">
    <property type="entry name" value="Gal_Oxase/kelch_b-propeller"/>
</dbReference>
<dbReference type="InterPro" id="IPR015915">
    <property type="entry name" value="Kelch-typ_b-propeller"/>
</dbReference>
<dbReference type="PANTHER" id="PTHR46228">
    <property type="entry name" value="KELCH DOMAIN-CONTAINING PROTEIN"/>
    <property type="match status" value="1"/>
</dbReference>
<dbReference type="PANTHER" id="PTHR46228:SF3">
    <property type="entry name" value="KELCH DOMAIN-CONTAINING PROTEIN 2"/>
    <property type="match status" value="1"/>
</dbReference>
<dbReference type="Pfam" id="PF24681">
    <property type="entry name" value="Kelch_KLHDC2_KLHL20_DRC7"/>
    <property type="match status" value="1"/>
</dbReference>
<dbReference type="SUPFAM" id="SSF50965">
    <property type="entry name" value="Galactose oxidase, central domain"/>
    <property type="match status" value="1"/>
</dbReference>
<dbReference type="SUPFAM" id="SSF117281">
    <property type="entry name" value="Kelch motif"/>
    <property type="match status" value="1"/>
</dbReference>
<evidence type="ECO:0000250" key="1">
    <source>
        <dbReference type="UniProtKB" id="Q9Y2U9"/>
    </source>
</evidence>
<evidence type="ECO:0000303" key="2">
    <source>
    </source>
</evidence>
<evidence type="ECO:0000305" key="3"/>
<evidence type="ECO:0000312" key="4">
    <source>
        <dbReference type="MGI" id="MGI:1916804"/>
    </source>
</evidence>
<reference key="1">
    <citation type="journal article" date="2005" name="DNA Cell Biol.">
        <title>Differentially expressed genes in endothelial differentiation.</title>
        <authorList>
            <person name="Ishii H."/>
            <person name="Mimori K."/>
            <person name="Mori M."/>
            <person name="Vecchione A."/>
        </authorList>
    </citation>
    <scope>NUCLEOTIDE SEQUENCE [MRNA]</scope>
</reference>
<reference key="2">
    <citation type="journal article" date="2005" name="Science">
        <title>The transcriptional landscape of the mammalian genome.</title>
        <authorList>
            <person name="Carninci P."/>
            <person name="Kasukawa T."/>
            <person name="Katayama S."/>
            <person name="Gough J."/>
            <person name="Frith M.C."/>
            <person name="Maeda N."/>
            <person name="Oyama R."/>
            <person name="Ravasi T."/>
            <person name="Lenhard B."/>
            <person name="Wells C."/>
            <person name="Kodzius R."/>
            <person name="Shimokawa K."/>
            <person name="Bajic V.B."/>
            <person name="Brenner S.E."/>
            <person name="Batalov S."/>
            <person name="Forrest A.R."/>
            <person name="Zavolan M."/>
            <person name="Davis M.J."/>
            <person name="Wilming L.G."/>
            <person name="Aidinis V."/>
            <person name="Allen J.E."/>
            <person name="Ambesi-Impiombato A."/>
            <person name="Apweiler R."/>
            <person name="Aturaliya R.N."/>
            <person name="Bailey T.L."/>
            <person name="Bansal M."/>
            <person name="Baxter L."/>
            <person name="Beisel K.W."/>
            <person name="Bersano T."/>
            <person name="Bono H."/>
            <person name="Chalk A.M."/>
            <person name="Chiu K.P."/>
            <person name="Choudhary V."/>
            <person name="Christoffels A."/>
            <person name="Clutterbuck D.R."/>
            <person name="Crowe M.L."/>
            <person name="Dalla E."/>
            <person name="Dalrymple B.P."/>
            <person name="de Bono B."/>
            <person name="Della Gatta G."/>
            <person name="di Bernardo D."/>
            <person name="Down T."/>
            <person name="Engstrom P."/>
            <person name="Fagiolini M."/>
            <person name="Faulkner G."/>
            <person name="Fletcher C.F."/>
            <person name="Fukushima T."/>
            <person name="Furuno M."/>
            <person name="Futaki S."/>
            <person name="Gariboldi M."/>
            <person name="Georgii-Hemming P."/>
            <person name="Gingeras T.R."/>
            <person name="Gojobori T."/>
            <person name="Green R.E."/>
            <person name="Gustincich S."/>
            <person name="Harbers M."/>
            <person name="Hayashi Y."/>
            <person name="Hensch T.K."/>
            <person name="Hirokawa N."/>
            <person name="Hill D."/>
            <person name="Huminiecki L."/>
            <person name="Iacono M."/>
            <person name="Ikeo K."/>
            <person name="Iwama A."/>
            <person name="Ishikawa T."/>
            <person name="Jakt M."/>
            <person name="Kanapin A."/>
            <person name="Katoh M."/>
            <person name="Kawasawa Y."/>
            <person name="Kelso J."/>
            <person name="Kitamura H."/>
            <person name="Kitano H."/>
            <person name="Kollias G."/>
            <person name="Krishnan S.P."/>
            <person name="Kruger A."/>
            <person name="Kummerfeld S.K."/>
            <person name="Kurochkin I.V."/>
            <person name="Lareau L.F."/>
            <person name="Lazarevic D."/>
            <person name="Lipovich L."/>
            <person name="Liu J."/>
            <person name="Liuni S."/>
            <person name="McWilliam S."/>
            <person name="Madan Babu M."/>
            <person name="Madera M."/>
            <person name="Marchionni L."/>
            <person name="Matsuda H."/>
            <person name="Matsuzawa S."/>
            <person name="Miki H."/>
            <person name="Mignone F."/>
            <person name="Miyake S."/>
            <person name="Morris K."/>
            <person name="Mottagui-Tabar S."/>
            <person name="Mulder N."/>
            <person name="Nakano N."/>
            <person name="Nakauchi H."/>
            <person name="Ng P."/>
            <person name="Nilsson R."/>
            <person name="Nishiguchi S."/>
            <person name="Nishikawa S."/>
            <person name="Nori F."/>
            <person name="Ohara O."/>
            <person name="Okazaki Y."/>
            <person name="Orlando V."/>
            <person name="Pang K.C."/>
            <person name="Pavan W.J."/>
            <person name="Pavesi G."/>
            <person name="Pesole G."/>
            <person name="Petrovsky N."/>
            <person name="Piazza S."/>
            <person name="Reed J."/>
            <person name="Reid J.F."/>
            <person name="Ring B.Z."/>
            <person name="Ringwald M."/>
            <person name="Rost B."/>
            <person name="Ruan Y."/>
            <person name="Salzberg S.L."/>
            <person name="Sandelin A."/>
            <person name="Schneider C."/>
            <person name="Schoenbach C."/>
            <person name="Sekiguchi K."/>
            <person name="Semple C.A."/>
            <person name="Seno S."/>
            <person name="Sessa L."/>
            <person name="Sheng Y."/>
            <person name="Shibata Y."/>
            <person name="Shimada H."/>
            <person name="Shimada K."/>
            <person name="Silva D."/>
            <person name="Sinclair B."/>
            <person name="Sperling S."/>
            <person name="Stupka E."/>
            <person name="Sugiura K."/>
            <person name="Sultana R."/>
            <person name="Takenaka Y."/>
            <person name="Taki K."/>
            <person name="Tammoja K."/>
            <person name="Tan S.L."/>
            <person name="Tang S."/>
            <person name="Taylor M.S."/>
            <person name="Tegner J."/>
            <person name="Teichmann S.A."/>
            <person name="Ueda H.R."/>
            <person name="van Nimwegen E."/>
            <person name="Verardo R."/>
            <person name="Wei C.L."/>
            <person name="Yagi K."/>
            <person name="Yamanishi H."/>
            <person name="Zabarovsky E."/>
            <person name="Zhu S."/>
            <person name="Zimmer A."/>
            <person name="Hide W."/>
            <person name="Bult C."/>
            <person name="Grimmond S.M."/>
            <person name="Teasdale R.D."/>
            <person name="Liu E.T."/>
            <person name="Brusic V."/>
            <person name="Quackenbush J."/>
            <person name="Wahlestedt C."/>
            <person name="Mattick J.S."/>
            <person name="Hume D.A."/>
            <person name="Kai C."/>
            <person name="Sasaki D."/>
            <person name="Tomaru Y."/>
            <person name="Fukuda S."/>
            <person name="Kanamori-Katayama M."/>
            <person name="Suzuki M."/>
            <person name="Aoki J."/>
            <person name="Arakawa T."/>
            <person name="Iida J."/>
            <person name="Imamura K."/>
            <person name="Itoh M."/>
            <person name="Kato T."/>
            <person name="Kawaji H."/>
            <person name="Kawagashira N."/>
            <person name="Kawashima T."/>
            <person name="Kojima M."/>
            <person name="Kondo S."/>
            <person name="Konno H."/>
            <person name="Nakano K."/>
            <person name="Ninomiya N."/>
            <person name="Nishio T."/>
            <person name="Okada M."/>
            <person name="Plessy C."/>
            <person name="Shibata K."/>
            <person name="Shiraki T."/>
            <person name="Suzuki S."/>
            <person name="Tagami M."/>
            <person name="Waki K."/>
            <person name="Watahiki A."/>
            <person name="Okamura-Oho Y."/>
            <person name="Suzuki H."/>
            <person name="Kawai J."/>
            <person name="Hayashizaki Y."/>
        </authorList>
    </citation>
    <scope>NUCLEOTIDE SEQUENCE [LARGE SCALE MRNA]</scope>
    <source>
        <strain>C57BL/6J</strain>
        <tissue>Tongue</tissue>
    </source>
</reference>
<reference key="3">
    <citation type="journal article" date="2009" name="PLoS Biol.">
        <title>Lineage-specific biology revealed by a finished genome assembly of the mouse.</title>
        <authorList>
            <person name="Church D.M."/>
            <person name="Goodstadt L."/>
            <person name="Hillier L.W."/>
            <person name="Zody M.C."/>
            <person name="Goldstein S."/>
            <person name="She X."/>
            <person name="Bult C.J."/>
            <person name="Agarwala R."/>
            <person name="Cherry J.L."/>
            <person name="DiCuccio M."/>
            <person name="Hlavina W."/>
            <person name="Kapustin Y."/>
            <person name="Meric P."/>
            <person name="Maglott D."/>
            <person name="Birtle Z."/>
            <person name="Marques A.C."/>
            <person name="Graves T."/>
            <person name="Zhou S."/>
            <person name="Teague B."/>
            <person name="Potamousis K."/>
            <person name="Churas C."/>
            <person name="Place M."/>
            <person name="Herschleb J."/>
            <person name="Runnheim R."/>
            <person name="Forrest D."/>
            <person name="Amos-Landgraf J."/>
            <person name="Schwartz D.C."/>
            <person name="Cheng Z."/>
            <person name="Lindblad-Toh K."/>
            <person name="Eichler E.E."/>
            <person name="Ponting C.P."/>
        </authorList>
    </citation>
    <scope>NUCLEOTIDE SEQUENCE [LARGE SCALE GENOMIC DNA]</scope>
    <source>
        <strain>C57BL/6J</strain>
    </source>
</reference>
<reference key="4">
    <citation type="journal article" date="2004" name="Genome Res.">
        <title>The status, quality, and expansion of the NIH full-length cDNA project: the Mammalian Gene Collection (MGC).</title>
        <authorList>
            <consortium name="The MGC Project Team"/>
        </authorList>
    </citation>
    <scope>NUCLEOTIDE SEQUENCE [LARGE SCALE MRNA]</scope>
    <source>
        <strain>FVB/N</strain>
        <tissue>Mammary tumor</tissue>
    </source>
</reference>
<sequence length="406" mass="45909">MADGNEDARAEDLPGPAFENYEAMELACPAERSGHVAVSDGRHMFVWGGYKSNQVRGLYDFYLPREELWIYNMETGRWKKINTEGDVPPSMSGSCAVCVDRVLYLFGGHHSRGNTNKFYMLDSRSADRGLQWERIDCQGIPPSSKDKLGVWVYKNKLIFFGGYGYLPEDKVLGTFEFDETSFWNSSHPRGWNDHVHILDTETFAWSQPITTGKAPSPRAAHACATVGNKGFVFGGRYRDARMNDLHYLNLDTWEWNELIPQGVCPVGRSWHSLTPVSSDHLFLFGGFTTEKQPLSDAWTYCISKNEWIQFNHPYVEKPRLWHTACASDEGEVIVFGGCANNLLVHHRAAHSNEVLIFSVQPKSLVRLSLEAVICFKEMLANSWSCLPKHLLHSVNQRFGSNNTSGS</sequence>
<comment type="function">
    <text evidence="1">Substrate-recognition component of a Cul2-RING (CRL2) E3 ubiquitin-protein ligase complex of the DesCEND (destruction via C-end degrons) pathway, which recognizes a C-degron located at the extreme C terminus of target proteins, leading to their ubiquitination and degradation (By similarity). The C-degron recognized by the DesCEND pathway is usually a motif of less than ten residues and can be present in full-length proteins, truncated proteins or proteolytically cleaved forms (By similarity). The CRL2(KLHDC2) complex specifically recognizes proteins with a diglycine (Gly-Gly) at the C-terminus, leading to their ubiquitination and degradation (By similarity). The CRL2(KLHDC2) complex mediates ubiquitination and degradation of truncated SELENOK and SELENOS selenoproteins produced by failed UGA/Sec decoding, which end with a diglycine (By similarity). The CRL2(KLHDC2) complex also recognizes proteolytically cleaved proteins ending with Gly-Gly, such as the N-terminal fragment of USP1, leading to their degradation (By similarity). May also act as an indirect repressor of CREB3-mediated transcription by interfering with CREB3-DNA-binding (By similarity).</text>
</comment>
<comment type="pathway">
    <text evidence="1">Protein modification; protein ubiquitination.</text>
</comment>
<comment type="subunit">
    <text evidence="1">Component of a CRL2(KLHDC2) E3 ubiquitin-protein ligase complex, also named ECS(KLHDC2) complex, composed of CUL2, Elongin BC (ELOB and ELOC), RBX1 and substrate-specific adapter KLHDC2 (By similarity). May form oligomers as a KLHDC2-ELOB-ELOC complex; this interaction is autoinhibitory for the E3 ligase complex as the substrate-binding site of KLHDC2 is blocked in the oligomer (By similarity). Interacts with CREB3; interaction is direct and specific as it does not interact with CREB1, ATF4, ATF6, JUN, FOS, CEBPA or herpes simplex virus transactivator VP16 (By similarity).</text>
</comment>
<comment type="subcellular location">
    <subcellularLocation>
        <location evidence="1">Nucleus</location>
    </subcellularLocation>
</comment>
<comment type="PTM">
    <text evidence="1">Autoubiquitinated by the CRL2(KLHDC2) E3 ligase complex.</text>
</comment>
<keyword id="KW-0880">Kelch repeat</keyword>
<keyword id="KW-0539">Nucleus</keyword>
<keyword id="KW-1185">Reference proteome</keyword>
<keyword id="KW-0677">Repeat</keyword>
<keyword id="KW-0832">Ubl conjugation</keyword>
<keyword id="KW-0833">Ubl conjugation pathway</keyword>
<organism>
    <name type="scientific">Mus musculus</name>
    <name type="common">Mouse</name>
    <dbReference type="NCBI Taxonomy" id="10090"/>
    <lineage>
        <taxon>Eukaryota</taxon>
        <taxon>Metazoa</taxon>
        <taxon>Chordata</taxon>
        <taxon>Craniata</taxon>
        <taxon>Vertebrata</taxon>
        <taxon>Euteleostomi</taxon>
        <taxon>Mammalia</taxon>
        <taxon>Eutheria</taxon>
        <taxon>Euarchontoglires</taxon>
        <taxon>Glires</taxon>
        <taxon>Rodentia</taxon>
        <taxon>Myomorpha</taxon>
        <taxon>Muroidea</taxon>
        <taxon>Muridae</taxon>
        <taxon>Murinae</taxon>
        <taxon>Mus</taxon>
        <taxon>Mus</taxon>
    </lineage>
</organism>
<accession>Q4G5Y1</accession>
<accession>E9QKN6</accession>
<accession>Q99JY2</accession>
<accession>Q9D784</accession>
<gene>
    <name evidence="4" type="primary">Klhdc2</name>
</gene>
<protein>
    <recommendedName>
        <fullName evidence="3">Kelch domain-containing protein 2</fullName>
    </recommendedName>
    <alternativeName>
        <fullName evidence="2">Endothelial differentiation inhibitory protein TNG</fullName>
    </alternativeName>
</protein>
<name>KLDC2_MOUSE</name>
<proteinExistence type="evidence at transcript level"/>